<evidence type="ECO:0000255" key="1"/>
<evidence type="ECO:0000269" key="2">
    <source>
    </source>
</evidence>
<evidence type="ECO:0000305" key="3"/>
<evidence type="ECO:0000305" key="4">
    <source>
    </source>
</evidence>
<dbReference type="EC" id="2.7.1.71"/>
<dbReference type="EMBL" id="L77117">
    <property type="protein sequence ID" value="AAB99451.1"/>
    <property type="molecule type" value="Genomic_DNA"/>
</dbReference>
<dbReference type="PIR" id="G64479">
    <property type="entry name" value="G64479"/>
</dbReference>
<dbReference type="RefSeq" id="WP_010870958.1">
    <property type="nucleotide sequence ID" value="NC_000909.1"/>
</dbReference>
<dbReference type="SMR" id="Q58835"/>
<dbReference type="FunCoup" id="Q58835">
    <property type="interactions" value="97"/>
</dbReference>
<dbReference type="STRING" id="243232.MJ_1440"/>
<dbReference type="PaxDb" id="243232-MJ_1440"/>
<dbReference type="EnsemblBacteria" id="AAB99451">
    <property type="protein sequence ID" value="AAB99451"/>
    <property type="gene ID" value="MJ_1440"/>
</dbReference>
<dbReference type="GeneID" id="1452344"/>
<dbReference type="KEGG" id="mja:MJ_1440"/>
<dbReference type="eggNOG" id="arCOG01025">
    <property type="taxonomic scope" value="Archaea"/>
</dbReference>
<dbReference type="HOGENOM" id="CLU_073768_0_0_2"/>
<dbReference type="InParanoid" id="Q58835"/>
<dbReference type="OrthoDB" id="9602at2157"/>
<dbReference type="PhylomeDB" id="Q58835"/>
<dbReference type="BioCyc" id="MetaCyc:MONOMER-18801"/>
<dbReference type="SABIO-RK" id="Q58835"/>
<dbReference type="UniPathway" id="UPA00053">
    <property type="reaction ID" value="UER00088"/>
</dbReference>
<dbReference type="Proteomes" id="UP000000805">
    <property type="component" value="Chromosome"/>
</dbReference>
<dbReference type="GO" id="GO:0005737">
    <property type="term" value="C:cytoplasm"/>
    <property type="evidence" value="ECO:0007669"/>
    <property type="project" value="UniProtKB-SubCell"/>
</dbReference>
<dbReference type="GO" id="GO:0005524">
    <property type="term" value="F:ATP binding"/>
    <property type="evidence" value="ECO:0007669"/>
    <property type="project" value="UniProtKB-UniRule"/>
</dbReference>
<dbReference type="GO" id="GO:0004765">
    <property type="term" value="F:shikimate kinase activity"/>
    <property type="evidence" value="ECO:0007669"/>
    <property type="project" value="UniProtKB-UniRule"/>
</dbReference>
<dbReference type="GO" id="GO:0008652">
    <property type="term" value="P:amino acid biosynthetic process"/>
    <property type="evidence" value="ECO:0007669"/>
    <property type="project" value="UniProtKB-KW"/>
</dbReference>
<dbReference type="GO" id="GO:0009073">
    <property type="term" value="P:aromatic amino acid family biosynthetic process"/>
    <property type="evidence" value="ECO:0007669"/>
    <property type="project" value="UniProtKB-KW"/>
</dbReference>
<dbReference type="GO" id="GO:0009423">
    <property type="term" value="P:chorismate biosynthetic process"/>
    <property type="evidence" value="ECO:0007669"/>
    <property type="project" value="UniProtKB-UniRule"/>
</dbReference>
<dbReference type="Gene3D" id="3.30.230.10">
    <property type="match status" value="1"/>
</dbReference>
<dbReference type="Gene3D" id="3.30.70.890">
    <property type="entry name" value="GHMP kinase, C-terminal domain"/>
    <property type="match status" value="1"/>
</dbReference>
<dbReference type="HAMAP" id="MF_00370">
    <property type="entry name" value="Shik_kinase_arch"/>
    <property type="match status" value="1"/>
</dbReference>
<dbReference type="InterPro" id="IPR013750">
    <property type="entry name" value="GHMP_kinase_C_dom"/>
</dbReference>
<dbReference type="InterPro" id="IPR036554">
    <property type="entry name" value="GHMP_kinase_C_sf"/>
</dbReference>
<dbReference type="InterPro" id="IPR006204">
    <property type="entry name" value="GHMP_kinase_N_dom"/>
</dbReference>
<dbReference type="InterPro" id="IPR020568">
    <property type="entry name" value="Ribosomal_Su5_D2-typ_SF"/>
</dbReference>
<dbReference type="InterPro" id="IPR014721">
    <property type="entry name" value="Ribsml_uS5_D2-typ_fold_subgr"/>
</dbReference>
<dbReference type="InterPro" id="IPR010189">
    <property type="entry name" value="SK_arc"/>
</dbReference>
<dbReference type="NCBIfam" id="TIGR01920">
    <property type="entry name" value="Shik_kin_archae"/>
    <property type="match status" value="1"/>
</dbReference>
<dbReference type="PANTHER" id="PTHR20861">
    <property type="entry name" value="HOMOSERINE/4-DIPHOSPHOCYTIDYL-2-C-METHYL-D-ERYTHRITOL KINASE"/>
    <property type="match status" value="1"/>
</dbReference>
<dbReference type="PANTHER" id="PTHR20861:SF3">
    <property type="entry name" value="SHIKIMATE KINASE"/>
    <property type="match status" value="1"/>
</dbReference>
<dbReference type="Pfam" id="PF08544">
    <property type="entry name" value="GHMP_kinases_C"/>
    <property type="match status" value="1"/>
</dbReference>
<dbReference type="Pfam" id="PF00288">
    <property type="entry name" value="GHMP_kinases_N"/>
    <property type="match status" value="1"/>
</dbReference>
<dbReference type="PIRSF" id="PIRSF005758">
    <property type="entry name" value="Shikimt_kin_arch"/>
    <property type="match status" value="1"/>
</dbReference>
<dbReference type="SUPFAM" id="SSF55060">
    <property type="entry name" value="GHMP Kinase, C-terminal domain"/>
    <property type="match status" value="1"/>
</dbReference>
<dbReference type="SUPFAM" id="SSF54211">
    <property type="entry name" value="Ribosomal protein S5 domain 2-like"/>
    <property type="match status" value="1"/>
</dbReference>
<feature type="chain" id="PRO_0000141574" description="Shikimate kinase">
    <location>
        <begin position="1"/>
        <end position="282"/>
    </location>
</feature>
<feature type="binding site" evidence="1">
    <location>
        <begin position="86"/>
        <end position="96"/>
    </location>
    <ligand>
        <name>ATP</name>
        <dbReference type="ChEBI" id="CHEBI:30616"/>
    </ligand>
</feature>
<keyword id="KW-0028">Amino-acid biosynthesis</keyword>
<keyword id="KW-0057">Aromatic amino acid biosynthesis</keyword>
<keyword id="KW-0067">ATP-binding</keyword>
<keyword id="KW-0963">Cytoplasm</keyword>
<keyword id="KW-0418">Kinase</keyword>
<keyword id="KW-0547">Nucleotide-binding</keyword>
<keyword id="KW-1185">Reference proteome</keyword>
<keyword id="KW-0808">Transferase</keyword>
<gene>
    <name type="primary">aroK</name>
    <name type="ordered locus">MJ1440</name>
</gene>
<reference key="1">
    <citation type="journal article" date="1996" name="Science">
        <title>Complete genome sequence of the methanogenic archaeon, Methanococcus jannaschii.</title>
        <authorList>
            <person name="Bult C.J."/>
            <person name="White O."/>
            <person name="Olsen G.J."/>
            <person name="Zhou L."/>
            <person name="Fleischmann R.D."/>
            <person name="Sutton G.G."/>
            <person name="Blake J.A."/>
            <person name="FitzGerald L.M."/>
            <person name="Clayton R.A."/>
            <person name="Gocayne J.D."/>
            <person name="Kerlavage A.R."/>
            <person name="Dougherty B.A."/>
            <person name="Tomb J.-F."/>
            <person name="Adams M.D."/>
            <person name="Reich C.I."/>
            <person name="Overbeek R."/>
            <person name="Kirkness E.F."/>
            <person name="Weinstock K.G."/>
            <person name="Merrick J.M."/>
            <person name="Glodek A."/>
            <person name="Scott J.L."/>
            <person name="Geoghagen N.S.M."/>
            <person name="Weidman J.F."/>
            <person name="Fuhrmann J.L."/>
            <person name="Nguyen D."/>
            <person name="Utterback T.R."/>
            <person name="Kelley J.M."/>
            <person name="Peterson J.D."/>
            <person name="Sadow P.W."/>
            <person name="Hanna M.C."/>
            <person name="Cotton M.D."/>
            <person name="Roberts K.M."/>
            <person name="Hurst M.A."/>
            <person name="Kaine B.P."/>
            <person name="Borodovsky M."/>
            <person name="Klenk H.-P."/>
            <person name="Fraser C.M."/>
            <person name="Smith H.O."/>
            <person name="Woese C.R."/>
            <person name="Venter J.C."/>
        </authorList>
    </citation>
    <scope>NUCLEOTIDE SEQUENCE [LARGE SCALE GENOMIC DNA]</scope>
    <source>
        <strain>ATCC 43067 / DSM 2661 / JAL-1 / JCM 10045 / NBRC 100440</strain>
    </source>
</reference>
<reference key="2">
    <citation type="journal article" date="2001" name="J. Bacteriol.">
        <title>Archaeal shikimate kinase, a new member of the GHMP-kinase family.</title>
        <authorList>
            <person name="Daugherty M."/>
            <person name="Vonstein V."/>
            <person name="Overbeek R."/>
            <person name="Osterman A."/>
        </authorList>
    </citation>
    <scope>CATALYTIC ACTIVITY</scope>
    <scope>PATHWAY</scope>
    <scope>SUBCELLULAR LOCATION</scope>
</reference>
<organism>
    <name type="scientific">Methanocaldococcus jannaschii (strain ATCC 43067 / DSM 2661 / JAL-1 / JCM 10045 / NBRC 100440)</name>
    <name type="common">Methanococcus jannaschii</name>
    <dbReference type="NCBI Taxonomy" id="243232"/>
    <lineage>
        <taxon>Archaea</taxon>
        <taxon>Methanobacteriati</taxon>
        <taxon>Methanobacteriota</taxon>
        <taxon>Methanomada group</taxon>
        <taxon>Methanococci</taxon>
        <taxon>Methanococcales</taxon>
        <taxon>Methanocaldococcaceae</taxon>
        <taxon>Methanocaldococcus</taxon>
    </lineage>
</organism>
<sequence>MEGKAYALASGTIINAIATGKGSAFGLDLKVYAKVKLIDDGKNKIEGKVLDNPNIKPNLIVRCVKNTLDYFGLNYSAYVETKTEIPIKSGLSSSSATSNAVVLATFDALGEKIDDELILNLGIKSSFDEKLTVTGAYDDATASYYGGITITDNIERKILKRDKMRDDLNVLILIPNLEKNVDVNRMKLIKDYVEIAFNEAINGNYFKALFLNGILYASALNFPTNIAIDALDAGAITAGLSGTGPSYIAMVEDENVEKVKEKLNRYGKVILTKPNNDGASIY</sequence>
<name>AROK_METJA</name>
<protein>
    <recommendedName>
        <fullName>Shikimate kinase</fullName>
        <shortName>SK</shortName>
        <ecNumber>2.7.1.71</ecNumber>
    </recommendedName>
</protein>
<accession>Q58835</accession>
<proteinExistence type="evidence at protein level"/>
<comment type="catalytic activity">
    <reaction evidence="2">
        <text>shikimate + ATP = 3-phosphoshikimate + ADP + H(+)</text>
        <dbReference type="Rhea" id="RHEA:13121"/>
        <dbReference type="ChEBI" id="CHEBI:15378"/>
        <dbReference type="ChEBI" id="CHEBI:30616"/>
        <dbReference type="ChEBI" id="CHEBI:36208"/>
        <dbReference type="ChEBI" id="CHEBI:145989"/>
        <dbReference type="ChEBI" id="CHEBI:456216"/>
        <dbReference type="EC" id="2.7.1.71"/>
    </reaction>
</comment>
<comment type="pathway">
    <text evidence="2">Metabolic intermediate biosynthesis; chorismate biosynthesis; chorismate from D-erythrose 4-phosphate and phosphoenolpyruvate: step 5/7.</text>
</comment>
<comment type="subcellular location">
    <subcellularLocation>
        <location evidence="4">Cytoplasm</location>
    </subcellularLocation>
</comment>
<comment type="similarity">
    <text evidence="3">Belongs to the GHMP kinase family. Archaeal shikimate kinase subfamily.</text>
</comment>